<gene>
    <name type="primary">fhkC</name>
    <name type="synonym">fhakC</name>
    <name type="synonym">pk1</name>
    <name type="synonym">pkgA</name>
    <name type="ORF">DDB_G0281567</name>
</gene>
<keyword id="KW-0067">ATP-binding</keyword>
<keyword id="KW-0418">Kinase</keyword>
<keyword id="KW-0547">Nucleotide-binding</keyword>
<keyword id="KW-0597">Phosphoprotein</keyword>
<keyword id="KW-1185">Reference proteome</keyword>
<keyword id="KW-0723">Serine/threonine-protein kinase</keyword>
<keyword id="KW-0808">Transferase</keyword>
<evidence type="ECO:0000250" key="1"/>
<evidence type="ECO:0000255" key="2">
    <source>
        <dbReference type="PROSITE-ProRule" id="PRU00086"/>
    </source>
</evidence>
<evidence type="ECO:0000255" key="3">
    <source>
        <dbReference type="PROSITE-ProRule" id="PRU00159"/>
    </source>
</evidence>
<evidence type="ECO:0000255" key="4">
    <source>
        <dbReference type="PROSITE-ProRule" id="PRU10027"/>
    </source>
</evidence>
<evidence type="ECO:0000256" key="5">
    <source>
        <dbReference type="SAM" id="MobiDB-lite"/>
    </source>
</evidence>
<evidence type="ECO:0000305" key="6"/>
<proteinExistence type="inferred from homology"/>
<organism>
    <name type="scientific">Dictyostelium discoideum</name>
    <name type="common">Social amoeba</name>
    <dbReference type="NCBI Taxonomy" id="44689"/>
    <lineage>
        <taxon>Eukaryota</taxon>
        <taxon>Amoebozoa</taxon>
        <taxon>Evosea</taxon>
        <taxon>Eumycetozoa</taxon>
        <taxon>Dictyostelia</taxon>
        <taxon>Dictyosteliales</taxon>
        <taxon>Dictyosteliaceae</taxon>
        <taxon>Dictyostelium</taxon>
    </lineage>
</organism>
<reference key="1">
    <citation type="journal article" date="2005" name="Nature">
        <title>The genome of the social amoeba Dictyostelium discoideum.</title>
        <authorList>
            <person name="Eichinger L."/>
            <person name="Pachebat J.A."/>
            <person name="Gloeckner G."/>
            <person name="Rajandream M.A."/>
            <person name="Sucgang R."/>
            <person name="Berriman M."/>
            <person name="Song J."/>
            <person name="Olsen R."/>
            <person name="Szafranski K."/>
            <person name="Xu Q."/>
            <person name="Tunggal B."/>
            <person name="Kummerfeld S."/>
            <person name="Madera M."/>
            <person name="Konfortov B.A."/>
            <person name="Rivero F."/>
            <person name="Bankier A.T."/>
            <person name="Lehmann R."/>
            <person name="Hamlin N."/>
            <person name="Davies R."/>
            <person name="Gaudet P."/>
            <person name="Fey P."/>
            <person name="Pilcher K."/>
            <person name="Chen G."/>
            <person name="Saunders D."/>
            <person name="Sodergren E.J."/>
            <person name="Davis P."/>
            <person name="Kerhornou A."/>
            <person name="Nie X."/>
            <person name="Hall N."/>
            <person name="Anjard C."/>
            <person name="Hemphill L."/>
            <person name="Bason N."/>
            <person name="Farbrother P."/>
            <person name="Desany B."/>
            <person name="Just E."/>
            <person name="Morio T."/>
            <person name="Rost R."/>
            <person name="Churcher C.M."/>
            <person name="Cooper J."/>
            <person name="Haydock S."/>
            <person name="van Driessche N."/>
            <person name="Cronin A."/>
            <person name="Goodhead I."/>
            <person name="Muzny D.M."/>
            <person name="Mourier T."/>
            <person name="Pain A."/>
            <person name="Lu M."/>
            <person name="Harper D."/>
            <person name="Lindsay R."/>
            <person name="Hauser H."/>
            <person name="James K.D."/>
            <person name="Quiles M."/>
            <person name="Madan Babu M."/>
            <person name="Saito T."/>
            <person name="Buchrieser C."/>
            <person name="Wardroper A."/>
            <person name="Felder M."/>
            <person name="Thangavelu M."/>
            <person name="Johnson D."/>
            <person name="Knights A."/>
            <person name="Loulseged H."/>
            <person name="Mungall K.L."/>
            <person name="Oliver K."/>
            <person name="Price C."/>
            <person name="Quail M.A."/>
            <person name="Urushihara H."/>
            <person name="Hernandez J."/>
            <person name="Rabbinowitsch E."/>
            <person name="Steffen D."/>
            <person name="Sanders M."/>
            <person name="Ma J."/>
            <person name="Kohara Y."/>
            <person name="Sharp S."/>
            <person name="Simmonds M.N."/>
            <person name="Spiegler S."/>
            <person name="Tivey A."/>
            <person name="Sugano S."/>
            <person name="White B."/>
            <person name="Walker D."/>
            <person name="Woodward J.R."/>
            <person name="Winckler T."/>
            <person name="Tanaka Y."/>
            <person name="Shaulsky G."/>
            <person name="Schleicher M."/>
            <person name="Weinstock G.M."/>
            <person name="Rosenthal A."/>
            <person name="Cox E.C."/>
            <person name="Chisholm R.L."/>
            <person name="Gibbs R.A."/>
            <person name="Loomis W.F."/>
            <person name="Platzer M."/>
            <person name="Kay R.R."/>
            <person name="Williams J.G."/>
            <person name="Dear P.H."/>
            <person name="Noegel A.A."/>
            <person name="Barrell B.G."/>
            <person name="Kuspa A."/>
        </authorList>
    </citation>
    <scope>NUCLEOTIDE SEQUENCE [LARGE SCALE GENOMIC DNA]</scope>
    <source>
        <strain>AX4</strain>
    </source>
</reference>
<reference key="2">
    <citation type="journal article" date="1991" name="Proc. Natl. Acad. Sci. U.S.A.">
        <title>Identification of a protein kinase multigene family of Dictyostelium discoideum: molecular cloning and expression of a cDNA encoding a developmentally regulated protein kinase.</title>
        <authorList>
            <person name="Haribabu B."/>
            <person name="Dottin R.P."/>
        </authorList>
    </citation>
    <scope>NUCLEOTIDE SEQUENCE [GENOMIC DNA] OF 347-379</scope>
</reference>
<accession>P34101</accession>
<accession>Q54TJ0</accession>
<protein>
    <recommendedName>
        <fullName>Probable serine/threonine-protein kinase fhkC</fullName>
        <ecNumber>2.7.11.1</ecNumber>
    </recommendedName>
    <alternativeName>
        <fullName>Forkhead-associated protein kinase C</fullName>
    </alternativeName>
    <alternativeName>
        <fullName>Protein kinase 1</fullName>
    </alternativeName>
</protein>
<feature type="chain" id="PRO_0000086541" description="Probable serine/threonine-protein kinase fhkC">
    <location>
        <begin position="1"/>
        <end position="595"/>
    </location>
</feature>
<feature type="domain" description="FHA" evidence="2">
    <location>
        <begin position="116"/>
        <end position="170"/>
    </location>
</feature>
<feature type="domain" description="Protein kinase" evidence="3">
    <location>
        <begin position="218"/>
        <end position="479"/>
    </location>
</feature>
<feature type="region of interest" description="Disordered" evidence="5">
    <location>
        <begin position="1"/>
        <end position="84"/>
    </location>
</feature>
<feature type="region of interest" description="Disordered" evidence="5">
    <location>
        <begin position="494"/>
        <end position="595"/>
    </location>
</feature>
<feature type="compositionally biased region" description="Low complexity" evidence="5">
    <location>
        <begin position="18"/>
        <end position="31"/>
    </location>
</feature>
<feature type="compositionally biased region" description="Polar residues" evidence="5">
    <location>
        <begin position="32"/>
        <end position="49"/>
    </location>
</feature>
<feature type="compositionally biased region" description="Low complexity" evidence="5">
    <location>
        <begin position="50"/>
        <end position="70"/>
    </location>
</feature>
<feature type="compositionally biased region" description="Polar residues" evidence="5">
    <location>
        <begin position="508"/>
        <end position="520"/>
    </location>
</feature>
<feature type="compositionally biased region" description="Low complexity" evidence="5">
    <location>
        <begin position="530"/>
        <end position="567"/>
    </location>
</feature>
<feature type="compositionally biased region" description="Basic and acidic residues" evidence="5">
    <location>
        <begin position="585"/>
        <end position="595"/>
    </location>
</feature>
<feature type="active site" description="Proton acceptor" evidence="3 4">
    <location>
        <position position="342"/>
    </location>
</feature>
<feature type="binding site" evidence="3">
    <location>
        <begin position="224"/>
        <end position="232"/>
    </location>
    <ligand>
        <name>ATP</name>
        <dbReference type="ChEBI" id="CHEBI:30616"/>
    </ligand>
</feature>
<feature type="binding site" evidence="3">
    <location>
        <position position="247"/>
    </location>
    <ligand>
        <name>ATP</name>
        <dbReference type="ChEBI" id="CHEBI:30616"/>
    </ligand>
</feature>
<feature type="modified residue" description="Phosphothreonine; by autocatalysis" evidence="1">
    <location>
        <position position="377"/>
    </location>
</feature>
<name>FHKC_DICDI</name>
<dbReference type="EC" id="2.7.11.1"/>
<dbReference type="EMBL" id="AAFI02000042">
    <property type="protein sequence ID" value="EAL66545.1"/>
    <property type="molecule type" value="Genomic_DNA"/>
</dbReference>
<dbReference type="EMBL" id="M59745">
    <property type="protein sequence ID" value="AAA33187.1"/>
    <property type="molecule type" value="Genomic_DNA"/>
</dbReference>
<dbReference type="PIR" id="B38578">
    <property type="entry name" value="B38578"/>
</dbReference>
<dbReference type="RefSeq" id="XP_640601.1">
    <property type="nucleotide sequence ID" value="XM_635509.1"/>
</dbReference>
<dbReference type="SMR" id="P34101"/>
<dbReference type="FunCoup" id="P34101">
    <property type="interactions" value="119"/>
</dbReference>
<dbReference type="STRING" id="44689.P34101"/>
<dbReference type="PaxDb" id="44689-DDB0220031"/>
<dbReference type="EnsemblProtists" id="EAL66545">
    <property type="protein sequence ID" value="EAL66545"/>
    <property type="gene ID" value="DDB_G0281567"/>
</dbReference>
<dbReference type="GeneID" id="8623211"/>
<dbReference type="KEGG" id="ddi:DDB_G0281567"/>
<dbReference type="dictyBase" id="DDB_G0281567">
    <property type="gene designation" value="fhkC"/>
</dbReference>
<dbReference type="VEuPathDB" id="AmoebaDB:DDB_G0281567"/>
<dbReference type="eggNOG" id="KOG0615">
    <property type="taxonomic scope" value="Eukaryota"/>
</dbReference>
<dbReference type="HOGENOM" id="CLU_000288_63_47_1"/>
<dbReference type="InParanoid" id="P34101"/>
<dbReference type="OMA" id="MLCAVQY"/>
<dbReference type="PhylomeDB" id="P34101"/>
<dbReference type="PRO" id="PR:P34101"/>
<dbReference type="Proteomes" id="UP000002195">
    <property type="component" value="Chromosome 3"/>
</dbReference>
<dbReference type="GO" id="GO:0005634">
    <property type="term" value="C:nucleus"/>
    <property type="evidence" value="ECO:0000318"/>
    <property type="project" value="GO_Central"/>
</dbReference>
<dbReference type="GO" id="GO:0005524">
    <property type="term" value="F:ATP binding"/>
    <property type="evidence" value="ECO:0007669"/>
    <property type="project" value="UniProtKB-KW"/>
</dbReference>
<dbReference type="GO" id="GO:0106310">
    <property type="term" value="F:protein serine kinase activity"/>
    <property type="evidence" value="ECO:0007669"/>
    <property type="project" value="RHEA"/>
</dbReference>
<dbReference type="GO" id="GO:0004674">
    <property type="term" value="F:protein serine/threonine kinase activity"/>
    <property type="evidence" value="ECO:0000250"/>
    <property type="project" value="dictyBase"/>
</dbReference>
<dbReference type="GO" id="GO:0000077">
    <property type="term" value="P:DNA damage checkpoint signaling"/>
    <property type="evidence" value="ECO:0000250"/>
    <property type="project" value="dictyBase"/>
</dbReference>
<dbReference type="GO" id="GO:0006974">
    <property type="term" value="P:DNA damage response"/>
    <property type="evidence" value="ECO:0000250"/>
    <property type="project" value="dictyBase"/>
</dbReference>
<dbReference type="GO" id="GO:0044773">
    <property type="term" value="P:mitotic DNA damage checkpoint signaling"/>
    <property type="evidence" value="ECO:0000318"/>
    <property type="project" value="GO_Central"/>
</dbReference>
<dbReference type="CDD" id="cd22690">
    <property type="entry name" value="FHA_RAD53-like_rpt2"/>
    <property type="match status" value="1"/>
</dbReference>
<dbReference type="CDD" id="cd05117">
    <property type="entry name" value="STKc_CAMK"/>
    <property type="match status" value="1"/>
</dbReference>
<dbReference type="FunFam" id="3.30.200.20:FF:000003">
    <property type="entry name" value="Non-specific serine/threonine protein kinase"/>
    <property type="match status" value="1"/>
</dbReference>
<dbReference type="FunFam" id="1.10.510.10:FF:002644">
    <property type="entry name" value="Probable serine/threonine-protein kinase fhkC"/>
    <property type="match status" value="1"/>
</dbReference>
<dbReference type="FunFam" id="2.60.200.20:FF:000122">
    <property type="entry name" value="Probable serine/threonine-protein kinase fhkC"/>
    <property type="match status" value="1"/>
</dbReference>
<dbReference type="Gene3D" id="2.60.200.20">
    <property type="match status" value="1"/>
</dbReference>
<dbReference type="Gene3D" id="1.10.510.10">
    <property type="entry name" value="Transferase(Phosphotransferase) domain 1"/>
    <property type="match status" value="1"/>
</dbReference>
<dbReference type="InterPro" id="IPR000253">
    <property type="entry name" value="FHA_dom"/>
</dbReference>
<dbReference type="InterPro" id="IPR011009">
    <property type="entry name" value="Kinase-like_dom_sf"/>
</dbReference>
<dbReference type="InterPro" id="IPR000719">
    <property type="entry name" value="Prot_kinase_dom"/>
</dbReference>
<dbReference type="InterPro" id="IPR017441">
    <property type="entry name" value="Protein_kinase_ATP_BS"/>
</dbReference>
<dbReference type="InterPro" id="IPR008271">
    <property type="entry name" value="Ser/Thr_kinase_AS"/>
</dbReference>
<dbReference type="InterPro" id="IPR008984">
    <property type="entry name" value="SMAD_FHA_dom_sf"/>
</dbReference>
<dbReference type="PANTHER" id="PTHR24347">
    <property type="entry name" value="SERINE/THREONINE-PROTEIN KINASE"/>
    <property type="match status" value="1"/>
</dbReference>
<dbReference type="Pfam" id="PF00498">
    <property type="entry name" value="FHA"/>
    <property type="match status" value="1"/>
</dbReference>
<dbReference type="Pfam" id="PF00069">
    <property type="entry name" value="Pkinase"/>
    <property type="match status" value="1"/>
</dbReference>
<dbReference type="SMART" id="SM00240">
    <property type="entry name" value="FHA"/>
    <property type="match status" value="1"/>
</dbReference>
<dbReference type="SMART" id="SM00220">
    <property type="entry name" value="S_TKc"/>
    <property type="match status" value="1"/>
</dbReference>
<dbReference type="SUPFAM" id="SSF56112">
    <property type="entry name" value="Protein kinase-like (PK-like)"/>
    <property type="match status" value="1"/>
</dbReference>
<dbReference type="SUPFAM" id="SSF49879">
    <property type="entry name" value="SMAD/FHA domain"/>
    <property type="match status" value="1"/>
</dbReference>
<dbReference type="PROSITE" id="PS50006">
    <property type="entry name" value="FHA_DOMAIN"/>
    <property type="match status" value="1"/>
</dbReference>
<dbReference type="PROSITE" id="PS00107">
    <property type="entry name" value="PROTEIN_KINASE_ATP"/>
    <property type="match status" value="1"/>
</dbReference>
<dbReference type="PROSITE" id="PS50011">
    <property type="entry name" value="PROTEIN_KINASE_DOM"/>
    <property type="match status" value="1"/>
</dbReference>
<dbReference type="PROSITE" id="PS00108">
    <property type="entry name" value="PROTEIN_KINASE_ST"/>
    <property type="match status" value="1"/>
</dbReference>
<sequence length="595" mass="67100">MNSNKEETTADGSVSTTEEQQQQQQPQQQEQINTTTASTTSNGENTASDNNNNSNNNNNNNTNNTNTNNNCDISMTEDNSKEEDTGIKVIGEGELWGKLISLNPTYPTIEIRQDSIILGRSKGVCNYTFTSPTVSGKHCKIYRDPTVKSRNVAFVDDTSTNGTFINNEVIGKGSKILIENGCEISVIPKKGSEKISFIYQDCFEEQKEMEQGGPQQKYDLREVLGTGNFASVRLGVEKETGNKYAIKIIDKKKMSMTSKRKDSLMDEVNVLTKVKHQNIISIKEVFETQKNLYLVLELVTGGELFDKIVSERKFQEDTCRYILKQLCDSVRYLHSNGIAHRDLKPENILLATPNSFLLKISDFGLSRAMDEGTYMKTMCGTPQYVAPEILTKGEREGYGKSVDLWSIGVITYILLCGFPPFGDPQTKDFFEKIKNGGFSFPSPYWDEISDEAKSLIKNLIKVDVEKRFTIDQALNHPWFTNHEEKTKEFYEKDKLEFPPPSTNDDHQPTPNTTSSNSQLVPESKCDQIQDNTTDNNNNNNNNNNNNNNNNNNNTTNNSNNIDNNNGNDESKSSKKRQLSEDSNINDEHEQKKVKN</sequence>
<comment type="catalytic activity">
    <reaction>
        <text>L-seryl-[protein] + ATP = O-phospho-L-seryl-[protein] + ADP + H(+)</text>
        <dbReference type="Rhea" id="RHEA:17989"/>
        <dbReference type="Rhea" id="RHEA-COMP:9863"/>
        <dbReference type="Rhea" id="RHEA-COMP:11604"/>
        <dbReference type="ChEBI" id="CHEBI:15378"/>
        <dbReference type="ChEBI" id="CHEBI:29999"/>
        <dbReference type="ChEBI" id="CHEBI:30616"/>
        <dbReference type="ChEBI" id="CHEBI:83421"/>
        <dbReference type="ChEBI" id="CHEBI:456216"/>
        <dbReference type="EC" id="2.7.11.1"/>
    </reaction>
</comment>
<comment type="catalytic activity">
    <reaction>
        <text>L-threonyl-[protein] + ATP = O-phospho-L-threonyl-[protein] + ADP + H(+)</text>
        <dbReference type="Rhea" id="RHEA:46608"/>
        <dbReference type="Rhea" id="RHEA-COMP:11060"/>
        <dbReference type="Rhea" id="RHEA-COMP:11605"/>
        <dbReference type="ChEBI" id="CHEBI:15378"/>
        <dbReference type="ChEBI" id="CHEBI:30013"/>
        <dbReference type="ChEBI" id="CHEBI:30616"/>
        <dbReference type="ChEBI" id="CHEBI:61977"/>
        <dbReference type="ChEBI" id="CHEBI:456216"/>
        <dbReference type="EC" id="2.7.11.1"/>
    </reaction>
</comment>
<comment type="similarity">
    <text evidence="6">Belongs to the protein kinase superfamily. CAMK Ser/Thr protein kinase family. CHK2 subfamily.</text>
</comment>